<feature type="initiator methionine" description="Removed" evidence="3">
    <location>
        <position position="1"/>
    </location>
</feature>
<feature type="chain" id="PRO_0000134112" description="Gamma-enolase">
    <location>
        <begin position="2"/>
        <end position="434"/>
    </location>
</feature>
<feature type="active site" description="Proton donor" evidence="2">
    <location>
        <position position="210"/>
    </location>
</feature>
<feature type="active site" description="Proton acceptor" evidence="2">
    <location>
        <position position="343"/>
    </location>
</feature>
<feature type="binding site" evidence="3">
    <location>
        <position position="40"/>
    </location>
    <ligand>
        <name>Mg(2+)</name>
        <dbReference type="ChEBI" id="CHEBI:18420"/>
        <label>1</label>
    </ligand>
</feature>
<feature type="binding site" evidence="2">
    <location>
        <position position="158"/>
    </location>
    <ligand>
        <name>substrate</name>
    </ligand>
</feature>
<feature type="binding site" evidence="2">
    <location>
        <position position="167"/>
    </location>
    <ligand>
        <name>substrate</name>
    </ligand>
</feature>
<feature type="binding site" evidence="3">
    <location>
        <position position="245"/>
    </location>
    <ligand>
        <name>Mg(2+)</name>
        <dbReference type="ChEBI" id="CHEBI:18420"/>
        <label>2</label>
    </ligand>
</feature>
<feature type="binding site">
    <location>
        <position position="245"/>
    </location>
    <ligand>
        <name>Mg(2+)</name>
        <dbReference type="ChEBI" id="CHEBI:18420"/>
    </ligand>
</feature>
<feature type="binding site" evidence="3">
    <location>
        <position position="293"/>
    </location>
    <ligand>
        <name>Mg(2+)</name>
        <dbReference type="ChEBI" id="CHEBI:18420"/>
        <label>2</label>
    </ligand>
</feature>
<feature type="binding site">
    <location>
        <position position="293"/>
    </location>
    <ligand>
        <name>Mg(2+)</name>
        <dbReference type="ChEBI" id="CHEBI:18420"/>
    </ligand>
</feature>
<feature type="binding site" evidence="2">
    <location>
        <position position="293"/>
    </location>
    <ligand>
        <name>substrate</name>
    </ligand>
</feature>
<feature type="binding site" evidence="3">
    <location>
        <position position="318"/>
    </location>
    <ligand>
        <name>Mg(2+)</name>
        <dbReference type="ChEBI" id="CHEBI:18420"/>
        <label>2</label>
    </ligand>
</feature>
<feature type="binding site">
    <location>
        <position position="318"/>
    </location>
    <ligand>
        <name>Mg(2+)</name>
        <dbReference type="ChEBI" id="CHEBI:18420"/>
    </ligand>
</feature>
<feature type="binding site" evidence="2">
    <location>
        <position position="318"/>
    </location>
    <ligand>
        <name>substrate</name>
    </ligand>
</feature>
<feature type="binding site" evidence="2">
    <location>
        <begin position="370"/>
        <end position="373"/>
    </location>
    <ligand>
        <name>substrate</name>
    </ligand>
</feature>
<feature type="binding site" evidence="2">
    <location>
        <position position="394"/>
    </location>
    <ligand>
        <name>substrate</name>
    </ligand>
</feature>
<feature type="modified residue" description="N-acetylserine" evidence="3">
    <location>
        <position position="2"/>
    </location>
</feature>
<feature type="modified residue" description="N6-acetyllysine" evidence="3">
    <location>
        <position position="5"/>
    </location>
</feature>
<feature type="modified residue" description="Phosphothreonine" evidence="12">
    <location>
        <position position="26"/>
    </location>
</feature>
<feature type="modified residue" description="Phosphotyrosine" evidence="11">
    <location>
        <position position="44"/>
    </location>
</feature>
<feature type="modified residue" description="N6-acetyllysine; alternate" evidence="4">
    <location>
        <position position="60"/>
    </location>
</feature>
<feature type="modified residue" description="N6-succinyllysine; alternate" evidence="4">
    <location>
        <position position="60"/>
    </location>
</feature>
<feature type="modified residue" description="N6-acetyllysine" evidence="3">
    <location>
        <position position="64"/>
    </location>
</feature>
<feature type="modified residue" description="N6-acetyllysine; alternate" evidence="3">
    <location>
        <position position="89"/>
    </location>
</feature>
<feature type="modified residue" description="N6-succinyllysine; alternate" evidence="4">
    <location>
        <position position="89"/>
    </location>
</feature>
<feature type="modified residue" description="N6-acetyllysine" evidence="3">
    <location>
        <position position="193"/>
    </location>
</feature>
<feature type="modified residue" description="N6-acetyllysine" evidence="5">
    <location>
        <position position="197"/>
    </location>
</feature>
<feature type="modified residue" description="N6-acetyllysine" evidence="5">
    <location>
        <position position="199"/>
    </location>
</feature>
<feature type="modified residue" description="N6-acetyllysine; alternate" evidence="4">
    <location>
        <position position="202"/>
    </location>
</feature>
<feature type="modified residue" description="N6-acetyllysine; alternate" evidence="3">
    <location>
        <position position="228"/>
    </location>
</feature>
<feature type="modified residue" description="N6-succinyllysine; alternate" evidence="4">
    <location>
        <position position="228"/>
    </location>
</feature>
<feature type="modified residue" description="N6-(2-hydroxyisobutyryl)lysine; alternate" evidence="7">
    <location>
        <position position="233"/>
    </location>
</feature>
<feature type="modified residue" description="N6-acetyllysine; alternate" evidence="3">
    <location>
        <position position="233"/>
    </location>
</feature>
<feature type="modified residue" description="N6-acetyllysine" evidence="3">
    <location>
        <position position="256"/>
    </location>
</feature>
<feature type="modified residue" description="Phosphoserine" evidence="13">
    <location>
        <position position="263"/>
    </location>
</feature>
<feature type="modified residue" description="Phosphotyrosine" evidence="3">
    <location>
        <position position="287"/>
    </location>
</feature>
<feature type="modified residue" description="Phosphoserine" evidence="3">
    <location>
        <position position="291"/>
    </location>
</feature>
<feature type="modified residue" description="N6-acetyllysine" evidence="4">
    <location>
        <position position="335"/>
    </location>
</feature>
<feature type="modified residue" description="N6-acetyllysine" evidence="4">
    <location>
        <position position="343"/>
    </location>
</feature>
<feature type="modified residue" description="N6-acetyllysine" evidence="4">
    <location>
        <position position="406"/>
    </location>
</feature>
<feature type="cross-link" description="Glycyl lysine isopeptide (Lys-Gly) (interchain with G-Cter in SUMO2); alternate" evidence="3">
    <location>
        <position position="202"/>
    </location>
</feature>
<feature type="splice variant" id="VSP_055482" description="In isoform 2." evidence="9">
    <original>GVLKAVDHINSTIAPALISSGLSVVEQEKLDNLMLELDGTENKS</original>
    <variation>A</variation>
    <location>
        <begin position="61"/>
        <end position="104"/>
    </location>
</feature>
<feature type="sequence variant" id="VAR_002354">
    <original>P</original>
    <variation>A</variation>
    <location>
        <position position="264"/>
    </location>
</feature>
<feature type="sequence variant" id="VAR_002355">
    <original>T</original>
    <variation>A</variation>
    <location>
        <position position="395"/>
    </location>
</feature>
<feature type="sequence conflict" description="In Ref. 1; CAA31512/CAA32505." evidence="10" ref="1">
    <original>E</original>
    <variation>Q</variation>
    <location>
        <position position="4"/>
    </location>
</feature>
<feature type="sequence conflict" description="In Ref. 2; AAA52388." evidence="10" ref="2">
    <original>AK</original>
    <variation>GC</variation>
    <location>
        <begin position="27"/>
        <end position="28"/>
    </location>
</feature>
<feature type="sequence conflict" description="In Ref. 2; AAA52388." evidence="10" ref="2">
    <original>E</original>
    <variation>N</variation>
    <location>
        <position position="127"/>
    </location>
</feature>
<feature type="sequence conflict" description="In Ref. 1; CAA31512/CAA32505." evidence="10" ref="1">
    <original>I</original>
    <variation>M</variation>
    <location>
        <position position="240"/>
    </location>
</feature>
<feature type="strand" evidence="15">
    <location>
        <begin position="5"/>
        <end position="12"/>
    </location>
</feature>
<feature type="strand" evidence="15">
    <location>
        <begin position="18"/>
        <end position="26"/>
    </location>
</feature>
<feature type="strand" evidence="15">
    <location>
        <begin position="29"/>
        <end position="34"/>
    </location>
</feature>
<feature type="strand" evidence="17">
    <location>
        <begin position="43"/>
        <end position="45"/>
    </location>
</feature>
<feature type="turn" evidence="17">
    <location>
        <begin position="54"/>
        <end position="56"/>
    </location>
</feature>
<feature type="helix" evidence="15">
    <location>
        <begin position="57"/>
        <end position="59"/>
    </location>
</feature>
<feature type="helix" evidence="15">
    <location>
        <begin position="63"/>
        <end position="71"/>
    </location>
</feature>
<feature type="helix" evidence="15">
    <location>
        <begin position="73"/>
        <end position="80"/>
    </location>
</feature>
<feature type="helix" evidence="15">
    <location>
        <begin position="87"/>
        <end position="98"/>
    </location>
</feature>
<feature type="strand" evidence="17">
    <location>
        <begin position="100"/>
        <end position="102"/>
    </location>
</feature>
<feature type="turn" evidence="15">
    <location>
        <begin position="104"/>
        <end position="106"/>
    </location>
</feature>
<feature type="helix" evidence="15">
    <location>
        <begin position="108"/>
        <end position="126"/>
    </location>
</feature>
<feature type="helix" evidence="15">
    <location>
        <begin position="130"/>
        <end position="138"/>
    </location>
</feature>
<feature type="strand" evidence="15">
    <location>
        <begin position="147"/>
        <end position="154"/>
    </location>
</feature>
<feature type="helix" evidence="15">
    <location>
        <begin position="156"/>
        <end position="158"/>
    </location>
</feature>
<feature type="strand" evidence="15">
    <location>
        <begin position="159"/>
        <end position="162"/>
    </location>
</feature>
<feature type="strand" evidence="15">
    <location>
        <begin position="167"/>
        <end position="171"/>
    </location>
</feature>
<feature type="helix" evidence="15">
    <location>
        <begin position="178"/>
        <end position="200"/>
    </location>
</feature>
<feature type="helix" evidence="15">
    <location>
        <begin position="202"/>
        <end position="205"/>
    </location>
</feature>
<feature type="strand" evidence="16">
    <location>
        <begin position="211"/>
        <end position="213"/>
    </location>
</feature>
<feature type="helix" evidence="15">
    <location>
        <begin position="220"/>
        <end position="234"/>
    </location>
</feature>
<feature type="turn" evidence="15">
    <location>
        <begin position="237"/>
        <end position="239"/>
    </location>
</feature>
<feature type="strand" evidence="15">
    <location>
        <begin position="241"/>
        <end position="245"/>
    </location>
</feature>
<feature type="helix" evidence="15">
    <location>
        <begin position="248"/>
        <end position="251"/>
    </location>
</feature>
<feature type="strand" evidence="14">
    <location>
        <begin position="254"/>
        <end position="257"/>
    </location>
</feature>
<feature type="turn" evidence="15">
    <location>
        <begin position="259"/>
        <end position="262"/>
    </location>
</feature>
<feature type="helix" evidence="15">
    <location>
        <begin position="267"/>
        <end position="269"/>
    </location>
</feature>
<feature type="helix" evidence="15">
    <location>
        <begin position="273"/>
        <end position="286"/>
    </location>
</feature>
<feature type="strand" evidence="15">
    <location>
        <begin position="289"/>
        <end position="293"/>
    </location>
</feature>
<feature type="helix" evidence="15">
    <location>
        <begin position="301"/>
        <end position="309"/>
    </location>
</feature>
<feature type="strand" evidence="15">
    <location>
        <begin position="312"/>
        <end position="318"/>
    </location>
</feature>
<feature type="turn" evidence="15">
    <location>
        <begin position="319"/>
        <end position="323"/>
    </location>
</feature>
<feature type="helix" evidence="15">
    <location>
        <begin position="325"/>
        <end position="333"/>
    </location>
</feature>
<feature type="strand" evidence="15">
    <location>
        <begin position="338"/>
        <end position="342"/>
    </location>
</feature>
<feature type="helix" evidence="15">
    <location>
        <begin position="344"/>
        <end position="347"/>
    </location>
</feature>
<feature type="helix" evidence="15">
    <location>
        <begin position="350"/>
        <end position="362"/>
    </location>
</feature>
<feature type="strand" evidence="15">
    <location>
        <begin position="366"/>
        <end position="370"/>
    </location>
</feature>
<feature type="helix" evidence="15">
    <location>
        <begin position="380"/>
        <end position="388"/>
    </location>
</feature>
<feature type="strand" evidence="15">
    <location>
        <begin position="391"/>
        <end position="394"/>
    </location>
</feature>
<feature type="helix" evidence="15">
    <location>
        <begin position="401"/>
        <end position="417"/>
    </location>
</feature>
<feature type="helix" evidence="15">
    <location>
        <begin position="418"/>
        <end position="420"/>
    </location>
</feature>
<feature type="helix" evidence="15">
    <location>
        <begin position="425"/>
        <end position="427"/>
    </location>
</feature>
<feature type="helix" evidence="15">
    <location>
        <begin position="431"/>
        <end position="433"/>
    </location>
</feature>
<dbReference type="EC" id="4.2.1.11"/>
<dbReference type="EMBL" id="X13120">
    <property type="protein sequence ID" value="CAA31512.1"/>
    <property type="molecule type" value="mRNA"/>
</dbReference>
<dbReference type="EMBL" id="X14327">
    <property type="protein sequence ID" value="CAA32505.1"/>
    <property type="molecule type" value="mRNA"/>
</dbReference>
<dbReference type="EMBL" id="M36768">
    <property type="protein sequence ID" value="AAA52388.1"/>
    <property type="status" value="ALT_INIT"/>
    <property type="molecule type" value="mRNA"/>
</dbReference>
<dbReference type="EMBL" id="M22349">
    <property type="protein sequence ID" value="AAB59554.1"/>
    <property type="molecule type" value="mRNA"/>
</dbReference>
<dbReference type="EMBL" id="X51956">
    <property type="protein sequence ID" value="CAA36215.1"/>
    <property type="molecule type" value="Genomic_DNA"/>
</dbReference>
<dbReference type="EMBL" id="AK295220">
    <property type="protein sequence ID" value="BAH12015.1"/>
    <property type="molecule type" value="mRNA"/>
</dbReference>
<dbReference type="EMBL" id="BT007383">
    <property type="protein sequence ID" value="AAP36047.1"/>
    <property type="molecule type" value="mRNA"/>
</dbReference>
<dbReference type="EMBL" id="U47924">
    <property type="protein sequence ID" value="AAB51320.1"/>
    <property type="molecule type" value="Genomic_DNA"/>
</dbReference>
<dbReference type="EMBL" id="BC002745">
    <property type="protein sequence ID" value="AAH02745.1"/>
    <property type="molecule type" value="mRNA"/>
</dbReference>
<dbReference type="CCDS" id="CCDS8570.1">
    <molecule id="P09104-1"/>
</dbReference>
<dbReference type="PIR" id="JU0060">
    <property type="entry name" value="NOHUG"/>
</dbReference>
<dbReference type="RefSeq" id="NP_001966.1">
    <molecule id="P09104-1"/>
    <property type="nucleotide sequence ID" value="NM_001975.3"/>
</dbReference>
<dbReference type="PDB" id="1TE6">
    <property type="method" value="X-ray"/>
    <property type="resolution" value="1.80 A"/>
    <property type="chains" value="A/B=2-434"/>
</dbReference>
<dbReference type="PDB" id="2AKM">
    <property type="method" value="X-ray"/>
    <property type="resolution" value="1.92 A"/>
    <property type="chains" value="A/B=2-434"/>
</dbReference>
<dbReference type="PDB" id="2AKZ">
    <property type="method" value="X-ray"/>
    <property type="resolution" value="1.36 A"/>
    <property type="chains" value="A/B=2-434"/>
</dbReference>
<dbReference type="PDB" id="3UCC">
    <property type="method" value="X-ray"/>
    <property type="resolution" value="1.50 A"/>
    <property type="chains" value="A/B=2-434"/>
</dbReference>
<dbReference type="PDB" id="3UCD">
    <property type="method" value="X-ray"/>
    <property type="resolution" value="1.41 A"/>
    <property type="chains" value="A/B=2-434"/>
</dbReference>
<dbReference type="PDB" id="3UJE">
    <property type="method" value="X-ray"/>
    <property type="resolution" value="1.55 A"/>
    <property type="chains" value="A/B=2-434"/>
</dbReference>
<dbReference type="PDB" id="3UJF">
    <property type="method" value="X-ray"/>
    <property type="resolution" value="2.10 A"/>
    <property type="chains" value="A/B=2-434"/>
</dbReference>
<dbReference type="PDB" id="3UJR">
    <property type="method" value="X-ray"/>
    <property type="resolution" value="1.40 A"/>
    <property type="chains" value="A/B=2-434"/>
</dbReference>
<dbReference type="PDB" id="3UJS">
    <property type="method" value="X-ray"/>
    <property type="resolution" value="1.65 A"/>
    <property type="chains" value="A/B=2-434"/>
</dbReference>
<dbReference type="PDB" id="4ZA0">
    <property type="method" value="X-ray"/>
    <property type="resolution" value="2.31 A"/>
    <property type="chains" value="A/B=1-434"/>
</dbReference>
<dbReference type="PDB" id="4ZCW">
    <property type="method" value="X-ray"/>
    <property type="resolution" value="1.99 A"/>
    <property type="chains" value="A/B=1-434"/>
</dbReference>
<dbReference type="PDB" id="5EU9">
    <property type="method" value="X-ray"/>
    <property type="resolution" value="2.05 A"/>
    <property type="chains" value="A/B/C/D/E/F/G/H=1-434"/>
</dbReference>
<dbReference type="PDB" id="5IDZ">
    <property type="method" value="X-ray"/>
    <property type="resolution" value="2.63 A"/>
    <property type="chains" value="A/B=1-434"/>
</dbReference>
<dbReference type="PDB" id="5TD9">
    <property type="method" value="X-ray"/>
    <property type="resolution" value="2.32 A"/>
    <property type="chains" value="A/B=1-434"/>
</dbReference>
<dbReference type="PDB" id="5TIJ">
    <property type="method" value="X-ray"/>
    <property type="resolution" value="2.63 A"/>
    <property type="chains" value="A/B=1-434"/>
</dbReference>
<dbReference type="PDB" id="7MBH">
    <property type="method" value="X-ray"/>
    <property type="resolution" value="2.10 A"/>
    <property type="chains" value="A/B=1-434"/>
</dbReference>
<dbReference type="PDBsum" id="1TE6"/>
<dbReference type="PDBsum" id="2AKM"/>
<dbReference type="PDBsum" id="2AKZ"/>
<dbReference type="PDBsum" id="3UCC"/>
<dbReference type="PDBsum" id="3UCD"/>
<dbReference type="PDBsum" id="3UJE"/>
<dbReference type="PDBsum" id="3UJF"/>
<dbReference type="PDBsum" id="3UJR"/>
<dbReference type="PDBsum" id="3UJS"/>
<dbReference type="PDBsum" id="4ZA0"/>
<dbReference type="PDBsum" id="4ZCW"/>
<dbReference type="PDBsum" id="5EU9"/>
<dbReference type="PDBsum" id="5IDZ"/>
<dbReference type="PDBsum" id="5TD9"/>
<dbReference type="PDBsum" id="5TIJ"/>
<dbReference type="PDBsum" id="7MBH"/>
<dbReference type="SMR" id="P09104"/>
<dbReference type="BioGRID" id="108340">
    <property type="interactions" value="133"/>
</dbReference>
<dbReference type="FunCoup" id="P09104">
    <property type="interactions" value="897"/>
</dbReference>
<dbReference type="IntAct" id="P09104">
    <property type="interactions" value="47"/>
</dbReference>
<dbReference type="MINT" id="P09104"/>
<dbReference type="STRING" id="9606.ENSP00000437402"/>
<dbReference type="BindingDB" id="P09104"/>
<dbReference type="DrugBank" id="DB02726">
    <property type="generic name" value="2-Phosphoglycolic Acid"/>
</dbReference>
<dbReference type="GlyGen" id="P09104">
    <property type="glycosylation" value="1 site, 1 O-linked glycan (1 site)"/>
</dbReference>
<dbReference type="iPTMnet" id="P09104"/>
<dbReference type="MetOSite" id="P09104"/>
<dbReference type="PhosphoSitePlus" id="P09104"/>
<dbReference type="SwissPalm" id="P09104"/>
<dbReference type="BioMuta" id="ENO2"/>
<dbReference type="DMDM" id="20981682"/>
<dbReference type="OGP" id="P09104"/>
<dbReference type="jPOST" id="P09104"/>
<dbReference type="MassIVE" id="P09104"/>
<dbReference type="PaxDb" id="9606-ENSP00000437402"/>
<dbReference type="PeptideAtlas" id="P09104"/>
<dbReference type="PRIDE" id="P09104"/>
<dbReference type="ProteomicsDB" id="52198">
    <molecule id="P09104-1"/>
</dbReference>
<dbReference type="ProteomicsDB" id="6473"/>
<dbReference type="Pumba" id="P09104"/>
<dbReference type="Antibodypedia" id="3514">
    <property type="antibodies" value="2187 antibodies from 53 providers"/>
</dbReference>
<dbReference type="DNASU" id="2026"/>
<dbReference type="Ensembl" id="ENST00000229277.6">
    <molecule id="P09104-1"/>
    <property type="protein sequence ID" value="ENSP00000229277.1"/>
    <property type="gene ID" value="ENSG00000111674.9"/>
</dbReference>
<dbReference type="Ensembl" id="ENST00000535366.5">
    <molecule id="P09104-1"/>
    <property type="protein sequence ID" value="ENSP00000437402.1"/>
    <property type="gene ID" value="ENSG00000111674.9"/>
</dbReference>
<dbReference type="Ensembl" id="ENST00000538763.5">
    <molecule id="P09104-2"/>
    <property type="protein sequence ID" value="ENSP00000441490.1"/>
    <property type="gene ID" value="ENSG00000111674.9"/>
</dbReference>
<dbReference type="Ensembl" id="ENST00000541477.5">
    <molecule id="P09104-1"/>
    <property type="protein sequence ID" value="ENSP00000438873.1"/>
    <property type="gene ID" value="ENSG00000111674.9"/>
</dbReference>
<dbReference type="GeneID" id="2026"/>
<dbReference type="KEGG" id="hsa:2026"/>
<dbReference type="MANE-Select" id="ENST00000229277.6">
    <property type="protein sequence ID" value="ENSP00000229277.1"/>
    <property type="RefSeq nucleotide sequence ID" value="NM_001975.3"/>
    <property type="RefSeq protein sequence ID" value="NP_001966.1"/>
</dbReference>
<dbReference type="UCSC" id="uc058knm.1">
    <molecule id="P09104-1"/>
    <property type="organism name" value="human"/>
</dbReference>
<dbReference type="AGR" id="HGNC:3353"/>
<dbReference type="CTD" id="2026"/>
<dbReference type="DisGeNET" id="2026"/>
<dbReference type="GeneCards" id="ENO2"/>
<dbReference type="HGNC" id="HGNC:3353">
    <property type="gene designation" value="ENO2"/>
</dbReference>
<dbReference type="HPA" id="ENSG00000111674">
    <property type="expression patterns" value="Group enriched (brain, retina)"/>
</dbReference>
<dbReference type="MalaCards" id="ENO2"/>
<dbReference type="MIM" id="131360">
    <property type="type" value="gene"/>
</dbReference>
<dbReference type="neXtProt" id="NX_P09104"/>
<dbReference type="OpenTargets" id="ENSG00000111674"/>
<dbReference type="PharmGKB" id="PA27788"/>
<dbReference type="VEuPathDB" id="HostDB:ENSG00000111674"/>
<dbReference type="eggNOG" id="KOG2670">
    <property type="taxonomic scope" value="Eukaryota"/>
</dbReference>
<dbReference type="GeneTree" id="ENSGT00950000182805"/>
<dbReference type="HOGENOM" id="CLU_031223_0_0_1"/>
<dbReference type="InParanoid" id="P09104"/>
<dbReference type="OMA" id="RCQLTGD"/>
<dbReference type="OrthoDB" id="1739814at2759"/>
<dbReference type="PAN-GO" id="P09104">
    <property type="GO annotations" value="3 GO annotations based on evolutionary models"/>
</dbReference>
<dbReference type="PhylomeDB" id="P09104"/>
<dbReference type="TreeFam" id="TF300391"/>
<dbReference type="BioCyc" id="MetaCyc:HS10646-MONOMER"/>
<dbReference type="BRENDA" id="4.2.1.11">
    <property type="organism ID" value="2681"/>
</dbReference>
<dbReference type="PathwayCommons" id="P09104"/>
<dbReference type="Reactome" id="R-HSA-70171">
    <property type="pathway name" value="Glycolysis"/>
</dbReference>
<dbReference type="Reactome" id="R-HSA-70263">
    <property type="pathway name" value="Gluconeogenesis"/>
</dbReference>
<dbReference type="SABIO-RK" id="P09104"/>
<dbReference type="SignaLink" id="P09104"/>
<dbReference type="SIGNOR" id="P09104"/>
<dbReference type="UniPathway" id="UPA00109">
    <property type="reaction ID" value="UER00187"/>
</dbReference>
<dbReference type="BioGRID-ORCS" id="2026">
    <property type="hits" value="14 hits in 1156 CRISPR screens"/>
</dbReference>
<dbReference type="CD-CODE" id="8C2F96ED">
    <property type="entry name" value="Centrosome"/>
</dbReference>
<dbReference type="CD-CODE" id="91857CE7">
    <property type="entry name" value="Nucleolus"/>
</dbReference>
<dbReference type="CD-CODE" id="FB4E32DD">
    <property type="entry name" value="Presynaptic clusters and postsynaptic densities"/>
</dbReference>
<dbReference type="ChiTaRS" id="ENO2">
    <property type="organism name" value="human"/>
</dbReference>
<dbReference type="EvolutionaryTrace" id="P09104"/>
<dbReference type="GeneWiki" id="Enolase_2"/>
<dbReference type="GenomeRNAi" id="2026"/>
<dbReference type="Pharos" id="P09104">
    <property type="development level" value="Tbio"/>
</dbReference>
<dbReference type="PRO" id="PR:P09104"/>
<dbReference type="Proteomes" id="UP000005640">
    <property type="component" value="Chromosome 12"/>
</dbReference>
<dbReference type="RNAct" id="P09104">
    <property type="molecule type" value="protein"/>
</dbReference>
<dbReference type="Bgee" id="ENSG00000111674">
    <property type="expression patterns" value="Expressed in cerebellar hemisphere and 172 other cell types or tissues"/>
</dbReference>
<dbReference type="ExpressionAtlas" id="P09104">
    <property type="expression patterns" value="baseline and differential"/>
</dbReference>
<dbReference type="GO" id="GO:0005938">
    <property type="term" value="C:cell cortex"/>
    <property type="evidence" value="ECO:0007669"/>
    <property type="project" value="Ensembl"/>
</dbReference>
<dbReference type="GO" id="GO:0009986">
    <property type="term" value="C:cell surface"/>
    <property type="evidence" value="ECO:0007669"/>
    <property type="project" value="Ensembl"/>
</dbReference>
<dbReference type="GO" id="GO:0005829">
    <property type="term" value="C:cytosol"/>
    <property type="evidence" value="ECO:0000314"/>
    <property type="project" value="HPA"/>
</dbReference>
<dbReference type="GO" id="GO:0070062">
    <property type="term" value="C:extracellular exosome"/>
    <property type="evidence" value="ECO:0007005"/>
    <property type="project" value="UniProtKB"/>
</dbReference>
<dbReference type="GO" id="GO:0005615">
    <property type="term" value="C:extracellular space"/>
    <property type="evidence" value="ECO:0007005"/>
    <property type="project" value="UniProtKB"/>
</dbReference>
<dbReference type="GO" id="GO:0030426">
    <property type="term" value="C:growth cone"/>
    <property type="evidence" value="ECO:0007669"/>
    <property type="project" value="Ensembl"/>
</dbReference>
<dbReference type="GO" id="GO:0016020">
    <property type="term" value="C:membrane"/>
    <property type="evidence" value="ECO:0000314"/>
    <property type="project" value="CAFA"/>
</dbReference>
<dbReference type="GO" id="GO:0045121">
    <property type="term" value="C:membrane raft"/>
    <property type="evidence" value="ECO:0007669"/>
    <property type="project" value="Ensembl"/>
</dbReference>
<dbReference type="GO" id="GO:0043204">
    <property type="term" value="C:perikaryon"/>
    <property type="evidence" value="ECO:0007669"/>
    <property type="project" value="Ensembl"/>
</dbReference>
<dbReference type="GO" id="GO:0000015">
    <property type="term" value="C:phosphopyruvate hydratase complex"/>
    <property type="evidence" value="ECO:0000318"/>
    <property type="project" value="GO_Central"/>
</dbReference>
<dbReference type="GO" id="GO:0001917">
    <property type="term" value="C:photoreceptor inner segment"/>
    <property type="evidence" value="ECO:0007669"/>
    <property type="project" value="Ensembl"/>
</dbReference>
<dbReference type="GO" id="GO:0005886">
    <property type="term" value="C:plasma membrane"/>
    <property type="evidence" value="ECO:0000314"/>
    <property type="project" value="HPA"/>
</dbReference>
<dbReference type="GO" id="GO:0097060">
    <property type="term" value="C:synaptic membrane"/>
    <property type="evidence" value="ECO:0007669"/>
    <property type="project" value="Ensembl"/>
</dbReference>
<dbReference type="GO" id="GO:0019899">
    <property type="term" value="F:enzyme binding"/>
    <property type="evidence" value="ECO:0007669"/>
    <property type="project" value="Ensembl"/>
</dbReference>
<dbReference type="GO" id="GO:0042802">
    <property type="term" value="F:identical protein binding"/>
    <property type="evidence" value="ECO:0007669"/>
    <property type="project" value="Ensembl"/>
</dbReference>
<dbReference type="GO" id="GO:0000287">
    <property type="term" value="F:magnesium ion binding"/>
    <property type="evidence" value="ECO:0007669"/>
    <property type="project" value="InterPro"/>
</dbReference>
<dbReference type="GO" id="GO:0004634">
    <property type="term" value="F:phosphopyruvate hydratase activity"/>
    <property type="evidence" value="ECO:0000250"/>
    <property type="project" value="CAFA"/>
</dbReference>
<dbReference type="GO" id="GO:0044877">
    <property type="term" value="F:protein-containing complex binding"/>
    <property type="evidence" value="ECO:0007669"/>
    <property type="project" value="Ensembl"/>
</dbReference>
<dbReference type="GO" id="GO:0061621">
    <property type="term" value="P:canonical glycolysis"/>
    <property type="evidence" value="ECO:0000304"/>
    <property type="project" value="Reactome"/>
</dbReference>
<dbReference type="GO" id="GO:0006094">
    <property type="term" value="P:gluconeogenesis"/>
    <property type="evidence" value="ECO:0000304"/>
    <property type="project" value="Reactome"/>
</dbReference>
<dbReference type="GO" id="GO:0006096">
    <property type="term" value="P:glycolytic process"/>
    <property type="evidence" value="ECO:0000250"/>
    <property type="project" value="CAFA"/>
</dbReference>
<dbReference type="GO" id="GO:0032355">
    <property type="term" value="P:response to estradiol"/>
    <property type="evidence" value="ECO:0007669"/>
    <property type="project" value="Ensembl"/>
</dbReference>
<dbReference type="GO" id="GO:0009410">
    <property type="term" value="P:response to xenobiotic stimulus"/>
    <property type="evidence" value="ECO:0007669"/>
    <property type="project" value="Ensembl"/>
</dbReference>
<dbReference type="CDD" id="cd03313">
    <property type="entry name" value="enolase"/>
    <property type="match status" value="1"/>
</dbReference>
<dbReference type="FunFam" id="3.30.390.10:FF:000001">
    <property type="entry name" value="Enolase"/>
    <property type="match status" value="1"/>
</dbReference>
<dbReference type="FunFam" id="3.20.20.120:FF:000002">
    <property type="entry name" value="Enolase 1"/>
    <property type="match status" value="1"/>
</dbReference>
<dbReference type="Gene3D" id="3.20.20.120">
    <property type="entry name" value="Enolase-like C-terminal domain"/>
    <property type="match status" value="1"/>
</dbReference>
<dbReference type="Gene3D" id="3.30.390.10">
    <property type="entry name" value="Enolase-like, N-terminal domain"/>
    <property type="match status" value="1"/>
</dbReference>
<dbReference type="HAMAP" id="MF_00318">
    <property type="entry name" value="Enolase"/>
    <property type="match status" value="1"/>
</dbReference>
<dbReference type="InterPro" id="IPR000941">
    <property type="entry name" value="Enolase"/>
</dbReference>
<dbReference type="InterPro" id="IPR036849">
    <property type="entry name" value="Enolase-like_C_sf"/>
</dbReference>
<dbReference type="InterPro" id="IPR029017">
    <property type="entry name" value="Enolase-like_N"/>
</dbReference>
<dbReference type="InterPro" id="IPR020810">
    <property type="entry name" value="Enolase_C"/>
</dbReference>
<dbReference type="InterPro" id="IPR020809">
    <property type="entry name" value="Enolase_CS"/>
</dbReference>
<dbReference type="InterPro" id="IPR020811">
    <property type="entry name" value="Enolase_N"/>
</dbReference>
<dbReference type="NCBIfam" id="TIGR01060">
    <property type="entry name" value="eno"/>
    <property type="match status" value="1"/>
</dbReference>
<dbReference type="PANTHER" id="PTHR11902">
    <property type="entry name" value="ENOLASE"/>
    <property type="match status" value="1"/>
</dbReference>
<dbReference type="PANTHER" id="PTHR11902:SF10">
    <property type="entry name" value="GAMMA-ENOLASE"/>
    <property type="match status" value="1"/>
</dbReference>
<dbReference type="Pfam" id="PF00113">
    <property type="entry name" value="Enolase_C"/>
    <property type="match status" value="1"/>
</dbReference>
<dbReference type="Pfam" id="PF03952">
    <property type="entry name" value="Enolase_N"/>
    <property type="match status" value="1"/>
</dbReference>
<dbReference type="PIRSF" id="PIRSF001400">
    <property type="entry name" value="Enolase"/>
    <property type="match status" value="1"/>
</dbReference>
<dbReference type="PRINTS" id="PR00148">
    <property type="entry name" value="ENOLASE"/>
</dbReference>
<dbReference type="SFLD" id="SFLDS00001">
    <property type="entry name" value="Enolase"/>
    <property type="match status" value="1"/>
</dbReference>
<dbReference type="SFLD" id="SFLDF00002">
    <property type="entry name" value="enolase"/>
    <property type="match status" value="1"/>
</dbReference>
<dbReference type="SMART" id="SM01192">
    <property type="entry name" value="Enolase_C"/>
    <property type="match status" value="1"/>
</dbReference>
<dbReference type="SMART" id="SM01193">
    <property type="entry name" value="Enolase_N"/>
    <property type="match status" value="1"/>
</dbReference>
<dbReference type="SUPFAM" id="SSF51604">
    <property type="entry name" value="Enolase C-terminal domain-like"/>
    <property type="match status" value="1"/>
</dbReference>
<dbReference type="SUPFAM" id="SSF54826">
    <property type="entry name" value="Enolase N-terminal domain-like"/>
    <property type="match status" value="1"/>
</dbReference>
<dbReference type="PROSITE" id="PS00164">
    <property type="entry name" value="ENOLASE"/>
    <property type="match status" value="1"/>
</dbReference>
<evidence type="ECO:0000250" key="1"/>
<evidence type="ECO:0000250" key="2">
    <source>
        <dbReference type="UniProtKB" id="P00924"/>
    </source>
</evidence>
<evidence type="ECO:0000250" key="3">
    <source>
        <dbReference type="UniProtKB" id="P06733"/>
    </source>
</evidence>
<evidence type="ECO:0000250" key="4">
    <source>
        <dbReference type="UniProtKB" id="P17182"/>
    </source>
</evidence>
<evidence type="ECO:0000250" key="5">
    <source>
        <dbReference type="UniProtKB" id="P17183"/>
    </source>
</evidence>
<evidence type="ECO:0000269" key="6">
    <source>
    </source>
</evidence>
<evidence type="ECO:0000269" key="7">
    <source>
    </source>
</evidence>
<evidence type="ECO:0000269" key="8">
    <source>
    </source>
</evidence>
<evidence type="ECO:0000303" key="9">
    <source>
    </source>
</evidence>
<evidence type="ECO:0000305" key="10"/>
<evidence type="ECO:0007744" key="11">
    <source>
    </source>
</evidence>
<evidence type="ECO:0007744" key="12">
    <source>
    </source>
</evidence>
<evidence type="ECO:0007744" key="13">
    <source>
    </source>
</evidence>
<evidence type="ECO:0007829" key="14">
    <source>
        <dbReference type="PDB" id="2AKM"/>
    </source>
</evidence>
<evidence type="ECO:0007829" key="15">
    <source>
        <dbReference type="PDB" id="2AKZ"/>
    </source>
</evidence>
<evidence type="ECO:0007829" key="16">
    <source>
        <dbReference type="PDB" id="3UJF"/>
    </source>
</evidence>
<evidence type="ECO:0007829" key="17">
    <source>
        <dbReference type="PDB" id="5TD9"/>
    </source>
</evidence>
<gene>
    <name type="primary">ENO2</name>
</gene>
<name>ENOG_HUMAN</name>
<sequence>MSIEKIWAREILDSRGNPTVEVDLYTAKGLFRAAVPSGASTGIYEALELRDGDKQRYLGKGVLKAVDHINSTIAPALISSGLSVVEQEKLDNLMLELDGTENKSKFGANAILGVSLAVCKAGAAERELPLYRHIAQLAGNSDLILPVPAFNVINGGSHAGNKLAMQEFMILPVGAESFRDAMRLGAEVYHTLKGVIKDKYGKDATNVGDEGGFAPNILENSEALELVKEAIDKAGYTEKIVIGMDVAASEFYRDGKYDLDFKSPTDPSRYITGDQLGALYQDFVRDYPVVSIEDPFDQDDWAAWSKFTANVGIQIVGDDLTVTNPKRIERAVEEKACNCLLLKVNQIGSVTEAIQACKLAQENGWGVMVSHRSGETEDTFIADLVVGLCTGQIKTGAPCRSERLAKYNQLMRIEEELGDEARFAGHNFRNPSVL</sequence>
<comment type="function">
    <text evidence="1">Has neurotrophic and neuroprotective properties on a broad spectrum of central nervous system (CNS) neurons. Binds, in a calcium-dependent manner, to cultured neocortical neurons and promotes cell survival (By similarity).</text>
</comment>
<comment type="catalytic activity">
    <reaction>
        <text>(2R)-2-phosphoglycerate = phosphoenolpyruvate + H2O</text>
        <dbReference type="Rhea" id="RHEA:10164"/>
        <dbReference type="ChEBI" id="CHEBI:15377"/>
        <dbReference type="ChEBI" id="CHEBI:58289"/>
        <dbReference type="ChEBI" id="CHEBI:58702"/>
        <dbReference type="EC" id="4.2.1.11"/>
    </reaction>
</comment>
<comment type="cofactor">
    <cofactor>
        <name>Mg(2+)</name>
        <dbReference type="ChEBI" id="CHEBI:18420"/>
    </cofactor>
    <text>Mg(2+) is required for catalysis and for stabilizing the dimer.</text>
</comment>
<comment type="pathway">
    <text>Carbohydrate degradation; glycolysis; pyruvate from D-glyceraldehyde 3-phosphate: step 4/5.</text>
</comment>
<comment type="subunit">
    <text evidence="6">Mammalian enolase is composed of 3 isozyme subunits, alpha, beta and gamma, which can form homodimers or heterodimers which are cell-type and development-specific.</text>
</comment>
<comment type="interaction">
    <interactant intactId="EBI-713154">
        <id>P09104</id>
    </interactant>
    <interactant intactId="EBI-353877">
        <id>P06733</id>
        <label>ENO1</label>
    </interactant>
    <organismsDiffer>false</organismsDiffer>
    <experiments>5</experiments>
</comment>
<comment type="interaction">
    <interactant intactId="EBI-713154">
        <id>P09104</id>
    </interactant>
    <interactant intactId="EBI-717399">
        <id>Q9BSI4</id>
        <label>TINF2</label>
    </interactant>
    <organismsDiffer>false</organismsDiffer>
    <experiments>2</experiments>
</comment>
<comment type="subcellular location">
    <subcellularLocation>
        <location evidence="1">Cytoplasm</location>
    </subcellularLocation>
    <subcellularLocation>
        <location evidence="1">Cell membrane</location>
    </subcellularLocation>
    <text evidence="1">Can translocate to the plasma membrane in either the homodimeric (alpha/alpha) or heterodimeric (alpha/gamma) form.</text>
</comment>
<comment type="alternative products">
    <event type="alternative splicing"/>
    <isoform>
        <id>P09104-1</id>
        <name>1</name>
        <sequence type="displayed"/>
    </isoform>
    <isoform>
        <id>P09104-2</id>
        <name>2</name>
        <sequence type="described" ref="VSP_055482"/>
    </isoform>
</comment>
<comment type="tissue specificity">
    <text>The alpha/alpha homodimer is expressed in embryo and in most adult tissues. The alpha/beta heterodimer and the beta/beta homodimer are found in striated muscle, and the alpha/gamma heterodimer and the gamma/gamma homodimer in neurons.</text>
</comment>
<comment type="developmental stage">
    <text>During ontogenesis, there is a transition from the alpha/alpha homodimer to the alpha/beta heterodimer in striated muscle cells, and to the alpha/gamma heterodimer in nerve cells.</text>
</comment>
<comment type="induction">
    <text>Levels of ENO2 increase dramatically in cardiovascular accidents, cerebral trauma, brain tumors and Creutzfeldt-Jakob disease.</text>
</comment>
<comment type="induction">
    <text evidence="8">(Microbial infection) Activated by human cytomegalovirus (HCMV) UL38 in order to provide the virus with glycosyl building blocks.</text>
</comment>
<comment type="similarity">
    <text evidence="10">Belongs to the enolase family.</text>
</comment>
<comment type="sequence caution" evidence="10">
    <conflict type="erroneous initiation">
        <sequence resource="EMBL-CDS" id="AAA52388"/>
    </conflict>
</comment>
<accession>P09104</accession>
<accession>B7Z2X9</accession>
<accession>Q96J33</accession>
<keyword id="KW-0002">3D-structure</keyword>
<keyword id="KW-0007">Acetylation</keyword>
<keyword id="KW-0025">Alternative splicing</keyword>
<keyword id="KW-1003">Cell membrane</keyword>
<keyword id="KW-0963">Cytoplasm</keyword>
<keyword id="KW-0903">Direct protein sequencing</keyword>
<keyword id="KW-0324">Glycolysis</keyword>
<keyword id="KW-0379">Hydroxylation</keyword>
<keyword id="KW-1017">Isopeptide bond</keyword>
<keyword id="KW-0456">Lyase</keyword>
<keyword id="KW-0460">Magnesium</keyword>
<keyword id="KW-0472">Membrane</keyword>
<keyword id="KW-0479">Metal-binding</keyword>
<keyword id="KW-0597">Phosphoprotein</keyword>
<keyword id="KW-1267">Proteomics identification</keyword>
<keyword id="KW-1185">Reference proteome</keyword>
<keyword id="KW-0832">Ubl conjugation</keyword>
<organism>
    <name type="scientific">Homo sapiens</name>
    <name type="common">Human</name>
    <dbReference type="NCBI Taxonomy" id="9606"/>
    <lineage>
        <taxon>Eukaryota</taxon>
        <taxon>Metazoa</taxon>
        <taxon>Chordata</taxon>
        <taxon>Craniata</taxon>
        <taxon>Vertebrata</taxon>
        <taxon>Euteleostomi</taxon>
        <taxon>Mammalia</taxon>
        <taxon>Eutheria</taxon>
        <taxon>Euarchontoglires</taxon>
        <taxon>Primates</taxon>
        <taxon>Haplorrhini</taxon>
        <taxon>Catarrhini</taxon>
        <taxon>Hominidae</taxon>
        <taxon>Homo</taxon>
    </lineage>
</organism>
<proteinExistence type="evidence at protein level"/>
<reference key="1">
    <citation type="journal article" date="1988" name="Eur. J. Biochem.">
        <title>Complete amino acid sequence of the neurone-specific gamma isozyme of enolase (NSE) from human brain and comparison with the non-neuronal alpha form (NNE).</title>
        <authorList>
            <person name="McAleese S.M."/>
            <person name="Dunbar B."/>
            <person name="Fothergill J."/>
            <person name="Hinks L."/>
            <person name="Day I.N.M."/>
        </authorList>
    </citation>
    <scope>NUCLEOTIDE SEQUENCE [MRNA] (ISOFORM 1)</scope>
    <scope>PARTIAL PROTEIN SEQUENCE</scope>
    <source>
        <tissue>Retina</tissue>
    </source>
</reference>
<reference key="2">
    <citation type="journal article" date="1988" name="J. Neurosci. Res.">
        <title>Human gamma enolase: isolation of a cDNA clone and expression in normal and tumor tissues of human origin.</title>
        <authorList>
            <person name="van Obberghen E."/>
            <person name="Kamholz J."/>
            <person name="Bishop J.G. III"/>
            <person name="Zomzely-Neurath C."/>
            <person name="Lazzarini R.A."/>
        </authorList>
    </citation>
    <scope>NUCLEOTIDE SEQUENCE [MRNA] (ISOFORM 1)</scope>
    <source>
        <tissue>Brain</tissue>
    </source>
</reference>
<reference key="3">
    <citation type="journal article" date="1989" name="Gene">
        <title>Cloning, expression and sequence homologies of cDNA for human gamma enolase.</title>
        <authorList>
            <person name="Oliva D."/>
            <person name="Barba G."/>
            <person name="Barbieri G."/>
            <person name="Giallongo A."/>
            <person name="Feo S."/>
        </authorList>
    </citation>
    <scope>NUCLEOTIDE SEQUENCE [MRNA] (ISOFORM 1)</scope>
</reference>
<reference key="4">
    <citation type="journal article" date="1991" name="Genomics">
        <title>Complete structure of the human gene encoding neuron-specific enolase.</title>
        <authorList>
            <person name="Oliva D."/>
            <person name="Cali L."/>
            <person name="Feo S."/>
            <person name="Giallongo A."/>
        </authorList>
    </citation>
    <scope>NUCLEOTIDE SEQUENCE [GENOMIC DNA]</scope>
    <source>
        <tissue>Hematopoietic</tissue>
    </source>
</reference>
<reference key="5">
    <citation type="journal article" date="1997" name="Genome Res.">
        <title>Large-scale sequencing in human chromosome 12p13: experimental and computational gene structure determination.</title>
        <authorList>
            <person name="Ansari-Lari M.A."/>
            <person name="Shen Y."/>
            <person name="Muzny D.M."/>
            <person name="Lee W."/>
            <person name="Gibbs R.A."/>
        </authorList>
    </citation>
    <scope>NUCLEOTIDE SEQUENCE [GENOMIC DNA]</scope>
    <source>
        <tissue>Brain</tissue>
    </source>
</reference>
<reference key="6">
    <citation type="journal article" date="2004" name="Nat. Genet.">
        <title>Complete sequencing and characterization of 21,243 full-length human cDNAs.</title>
        <authorList>
            <person name="Ota T."/>
            <person name="Suzuki Y."/>
            <person name="Nishikawa T."/>
            <person name="Otsuki T."/>
            <person name="Sugiyama T."/>
            <person name="Irie R."/>
            <person name="Wakamatsu A."/>
            <person name="Hayashi K."/>
            <person name="Sato H."/>
            <person name="Nagai K."/>
            <person name="Kimura K."/>
            <person name="Makita H."/>
            <person name="Sekine M."/>
            <person name="Obayashi M."/>
            <person name="Nishi T."/>
            <person name="Shibahara T."/>
            <person name="Tanaka T."/>
            <person name="Ishii S."/>
            <person name="Yamamoto J."/>
            <person name="Saito K."/>
            <person name="Kawai Y."/>
            <person name="Isono Y."/>
            <person name="Nakamura Y."/>
            <person name="Nagahari K."/>
            <person name="Murakami K."/>
            <person name="Yasuda T."/>
            <person name="Iwayanagi T."/>
            <person name="Wagatsuma M."/>
            <person name="Shiratori A."/>
            <person name="Sudo H."/>
            <person name="Hosoiri T."/>
            <person name="Kaku Y."/>
            <person name="Kodaira H."/>
            <person name="Kondo H."/>
            <person name="Sugawara M."/>
            <person name="Takahashi M."/>
            <person name="Kanda K."/>
            <person name="Yokoi T."/>
            <person name="Furuya T."/>
            <person name="Kikkawa E."/>
            <person name="Omura Y."/>
            <person name="Abe K."/>
            <person name="Kamihara K."/>
            <person name="Katsuta N."/>
            <person name="Sato K."/>
            <person name="Tanikawa M."/>
            <person name="Yamazaki M."/>
            <person name="Ninomiya K."/>
            <person name="Ishibashi T."/>
            <person name="Yamashita H."/>
            <person name="Murakawa K."/>
            <person name="Fujimori K."/>
            <person name="Tanai H."/>
            <person name="Kimata M."/>
            <person name="Watanabe M."/>
            <person name="Hiraoka S."/>
            <person name="Chiba Y."/>
            <person name="Ishida S."/>
            <person name="Ono Y."/>
            <person name="Takiguchi S."/>
            <person name="Watanabe S."/>
            <person name="Yosida M."/>
            <person name="Hotuta T."/>
            <person name="Kusano J."/>
            <person name="Kanehori K."/>
            <person name="Takahashi-Fujii A."/>
            <person name="Hara H."/>
            <person name="Tanase T.-O."/>
            <person name="Nomura Y."/>
            <person name="Togiya S."/>
            <person name="Komai F."/>
            <person name="Hara R."/>
            <person name="Takeuchi K."/>
            <person name="Arita M."/>
            <person name="Imose N."/>
            <person name="Musashino K."/>
            <person name="Yuuki H."/>
            <person name="Oshima A."/>
            <person name="Sasaki N."/>
            <person name="Aotsuka S."/>
            <person name="Yoshikawa Y."/>
            <person name="Matsunawa H."/>
            <person name="Ichihara T."/>
            <person name="Shiohata N."/>
            <person name="Sano S."/>
            <person name="Moriya S."/>
            <person name="Momiyama H."/>
            <person name="Satoh N."/>
            <person name="Takami S."/>
            <person name="Terashima Y."/>
            <person name="Suzuki O."/>
            <person name="Nakagawa S."/>
            <person name="Senoh A."/>
            <person name="Mizoguchi H."/>
            <person name="Goto Y."/>
            <person name="Shimizu F."/>
            <person name="Wakebe H."/>
            <person name="Hishigaki H."/>
            <person name="Watanabe T."/>
            <person name="Sugiyama A."/>
            <person name="Takemoto M."/>
            <person name="Kawakami B."/>
            <person name="Yamazaki M."/>
            <person name="Watanabe K."/>
            <person name="Kumagai A."/>
            <person name="Itakura S."/>
            <person name="Fukuzumi Y."/>
            <person name="Fujimori Y."/>
            <person name="Komiyama M."/>
            <person name="Tashiro H."/>
            <person name="Tanigami A."/>
            <person name="Fujiwara T."/>
            <person name="Ono T."/>
            <person name="Yamada K."/>
            <person name="Fujii Y."/>
            <person name="Ozaki K."/>
            <person name="Hirao M."/>
            <person name="Ohmori Y."/>
            <person name="Kawabata A."/>
            <person name="Hikiji T."/>
            <person name="Kobatake N."/>
            <person name="Inagaki H."/>
            <person name="Ikema Y."/>
            <person name="Okamoto S."/>
            <person name="Okitani R."/>
            <person name="Kawakami T."/>
            <person name="Noguchi S."/>
            <person name="Itoh T."/>
            <person name="Shigeta K."/>
            <person name="Senba T."/>
            <person name="Matsumura K."/>
            <person name="Nakajima Y."/>
            <person name="Mizuno T."/>
            <person name="Morinaga M."/>
            <person name="Sasaki M."/>
            <person name="Togashi T."/>
            <person name="Oyama M."/>
            <person name="Hata H."/>
            <person name="Watanabe M."/>
            <person name="Komatsu T."/>
            <person name="Mizushima-Sugano J."/>
            <person name="Satoh T."/>
            <person name="Shirai Y."/>
            <person name="Takahashi Y."/>
            <person name="Nakagawa K."/>
            <person name="Okumura K."/>
            <person name="Nagase T."/>
            <person name="Nomura N."/>
            <person name="Kikuchi H."/>
            <person name="Masuho Y."/>
            <person name="Yamashita R."/>
            <person name="Nakai K."/>
            <person name="Yada T."/>
            <person name="Nakamura Y."/>
            <person name="Ohara O."/>
            <person name="Isogai T."/>
            <person name="Sugano S."/>
        </authorList>
    </citation>
    <scope>NUCLEOTIDE SEQUENCE [LARGE SCALE MRNA] (ISOFORM 2)</scope>
    <source>
        <tissue>Caudate nucleus</tissue>
    </source>
</reference>
<reference key="7">
    <citation type="submission" date="2004-10" db="EMBL/GenBank/DDBJ databases">
        <title>Cloning of human full-length CDSs in BD Creator(TM) system donor vector.</title>
        <authorList>
            <person name="Kalnine N."/>
            <person name="Chen X."/>
            <person name="Rolfs A."/>
            <person name="Halleck A."/>
            <person name="Hines L."/>
            <person name="Eisenstein S."/>
            <person name="Koundinya M."/>
            <person name="Raphael J."/>
            <person name="Moreira D."/>
            <person name="Kelley T."/>
            <person name="LaBaer J."/>
            <person name="Lin Y."/>
            <person name="Phelan M."/>
            <person name="Farmer A."/>
        </authorList>
    </citation>
    <scope>NUCLEOTIDE SEQUENCE [LARGE SCALE MRNA] (ISOFORM 1)</scope>
</reference>
<reference key="8">
    <citation type="journal article" date="2006" name="Nature">
        <title>The finished DNA sequence of human chromosome 12.</title>
        <authorList>
            <person name="Scherer S.E."/>
            <person name="Muzny D.M."/>
            <person name="Buhay C.J."/>
            <person name="Chen R."/>
            <person name="Cree A."/>
            <person name="Ding Y."/>
            <person name="Dugan-Rocha S."/>
            <person name="Gill R."/>
            <person name="Gunaratne P."/>
            <person name="Harris R.A."/>
            <person name="Hawes A.C."/>
            <person name="Hernandez J."/>
            <person name="Hodgson A.V."/>
            <person name="Hume J."/>
            <person name="Jackson A."/>
            <person name="Khan Z.M."/>
            <person name="Kovar-Smith C."/>
            <person name="Lewis L.R."/>
            <person name="Lozado R.J."/>
            <person name="Metzker M.L."/>
            <person name="Milosavljevic A."/>
            <person name="Miner G.R."/>
            <person name="Montgomery K.T."/>
            <person name="Morgan M.B."/>
            <person name="Nazareth L.V."/>
            <person name="Scott G."/>
            <person name="Sodergren E."/>
            <person name="Song X.-Z."/>
            <person name="Steffen D."/>
            <person name="Lovering R.C."/>
            <person name="Wheeler D.A."/>
            <person name="Worley K.C."/>
            <person name="Yuan Y."/>
            <person name="Zhang Z."/>
            <person name="Adams C.Q."/>
            <person name="Ansari-Lari M.A."/>
            <person name="Ayele M."/>
            <person name="Brown M.J."/>
            <person name="Chen G."/>
            <person name="Chen Z."/>
            <person name="Clerc-Blankenburg K.P."/>
            <person name="Davis C."/>
            <person name="Delgado O."/>
            <person name="Dinh H.H."/>
            <person name="Draper H."/>
            <person name="Gonzalez-Garay M.L."/>
            <person name="Havlak P."/>
            <person name="Jackson L.R."/>
            <person name="Jacob L.S."/>
            <person name="Kelly S.H."/>
            <person name="Li L."/>
            <person name="Li Z."/>
            <person name="Liu J."/>
            <person name="Liu W."/>
            <person name="Lu J."/>
            <person name="Maheshwari M."/>
            <person name="Nguyen B.-V."/>
            <person name="Okwuonu G.O."/>
            <person name="Pasternak S."/>
            <person name="Perez L.M."/>
            <person name="Plopper F.J.H."/>
            <person name="Santibanez J."/>
            <person name="Shen H."/>
            <person name="Tabor P.E."/>
            <person name="Verduzco D."/>
            <person name="Waldron L."/>
            <person name="Wang Q."/>
            <person name="Williams G.A."/>
            <person name="Zhang J."/>
            <person name="Zhou J."/>
            <person name="Allen C.C."/>
            <person name="Amin A.G."/>
            <person name="Anyalebechi V."/>
            <person name="Bailey M."/>
            <person name="Barbaria J.A."/>
            <person name="Bimage K.E."/>
            <person name="Bryant N.P."/>
            <person name="Burch P.E."/>
            <person name="Burkett C.E."/>
            <person name="Burrell K.L."/>
            <person name="Calderon E."/>
            <person name="Cardenas V."/>
            <person name="Carter K."/>
            <person name="Casias K."/>
            <person name="Cavazos I."/>
            <person name="Cavazos S.R."/>
            <person name="Ceasar H."/>
            <person name="Chacko J."/>
            <person name="Chan S.N."/>
            <person name="Chavez D."/>
            <person name="Christopoulos C."/>
            <person name="Chu J."/>
            <person name="Cockrell R."/>
            <person name="Cox C.D."/>
            <person name="Dang M."/>
            <person name="Dathorne S.R."/>
            <person name="David R."/>
            <person name="Davis C.M."/>
            <person name="Davy-Carroll L."/>
            <person name="Deshazo D.R."/>
            <person name="Donlin J.E."/>
            <person name="D'Souza L."/>
            <person name="Eaves K.A."/>
            <person name="Egan A."/>
            <person name="Emery-Cohen A.J."/>
            <person name="Escotto M."/>
            <person name="Flagg N."/>
            <person name="Forbes L.D."/>
            <person name="Gabisi A.M."/>
            <person name="Garza M."/>
            <person name="Hamilton C."/>
            <person name="Henderson N."/>
            <person name="Hernandez O."/>
            <person name="Hines S."/>
            <person name="Hogues M.E."/>
            <person name="Huang M."/>
            <person name="Idlebird D.G."/>
            <person name="Johnson R."/>
            <person name="Jolivet A."/>
            <person name="Jones S."/>
            <person name="Kagan R."/>
            <person name="King L.M."/>
            <person name="Leal B."/>
            <person name="Lebow H."/>
            <person name="Lee S."/>
            <person name="LeVan J.M."/>
            <person name="Lewis L.C."/>
            <person name="London P."/>
            <person name="Lorensuhewa L.M."/>
            <person name="Loulseged H."/>
            <person name="Lovett D.A."/>
            <person name="Lucier A."/>
            <person name="Lucier R.L."/>
            <person name="Ma J."/>
            <person name="Madu R.C."/>
            <person name="Mapua P."/>
            <person name="Martindale A.D."/>
            <person name="Martinez E."/>
            <person name="Massey E."/>
            <person name="Mawhiney S."/>
            <person name="Meador M.G."/>
            <person name="Mendez S."/>
            <person name="Mercado C."/>
            <person name="Mercado I.C."/>
            <person name="Merritt C.E."/>
            <person name="Miner Z.L."/>
            <person name="Minja E."/>
            <person name="Mitchell T."/>
            <person name="Mohabbat F."/>
            <person name="Mohabbat K."/>
            <person name="Montgomery B."/>
            <person name="Moore N."/>
            <person name="Morris S."/>
            <person name="Munidasa M."/>
            <person name="Ngo R.N."/>
            <person name="Nguyen N.B."/>
            <person name="Nickerson E."/>
            <person name="Nwaokelemeh O.O."/>
            <person name="Nwokenkwo S."/>
            <person name="Obregon M."/>
            <person name="Oguh M."/>
            <person name="Oragunye N."/>
            <person name="Oviedo R.J."/>
            <person name="Parish B.J."/>
            <person name="Parker D.N."/>
            <person name="Parrish J."/>
            <person name="Parks K.L."/>
            <person name="Paul H.A."/>
            <person name="Payton B.A."/>
            <person name="Perez A."/>
            <person name="Perrin W."/>
            <person name="Pickens A."/>
            <person name="Primus E.L."/>
            <person name="Pu L.-L."/>
            <person name="Puazo M."/>
            <person name="Quiles M.M."/>
            <person name="Quiroz J.B."/>
            <person name="Rabata D."/>
            <person name="Reeves K."/>
            <person name="Ruiz S.J."/>
            <person name="Shao H."/>
            <person name="Sisson I."/>
            <person name="Sonaike T."/>
            <person name="Sorelle R.P."/>
            <person name="Sutton A.E."/>
            <person name="Svatek A.F."/>
            <person name="Svetz L.A."/>
            <person name="Tamerisa K.S."/>
            <person name="Taylor T.R."/>
            <person name="Teague B."/>
            <person name="Thomas N."/>
            <person name="Thorn R.D."/>
            <person name="Trejos Z.Y."/>
            <person name="Trevino B.K."/>
            <person name="Ukegbu O.N."/>
            <person name="Urban J.B."/>
            <person name="Vasquez L.I."/>
            <person name="Vera V.A."/>
            <person name="Villasana D.M."/>
            <person name="Wang L."/>
            <person name="Ward-Moore S."/>
            <person name="Warren J.T."/>
            <person name="Wei X."/>
            <person name="White F."/>
            <person name="Williamson A.L."/>
            <person name="Wleczyk R."/>
            <person name="Wooden H.S."/>
            <person name="Wooden S.H."/>
            <person name="Yen J."/>
            <person name="Yoon L."/>
            <person name="Yoon V."/>
            <person name="Zorrilla S.E."/>
            <person name="Nelson D."/>
            <person name="Kucherlapati R."/>
            <person name="Weinstock G."/>
            <person name="Gibbs R.A."/>
        </authorList>
    </citation>
    <scope>NUCLEOTIDE SEQUENCE [LARGE SCALE GENOMIC DNA]</scope>
</reference>
<reference key="9">
    <citation type="journal article" date="2004" name="Genome Res.">
        <title>The status, quality, and expansion of the NIH full-length cDNA project: the Mammalian Gene Collection (MGC).</title>
        <authorList>
            <consortium name="The MGC Project Team"/>
        </authorList>
    </citation>
    <scope>NUCLEOTIDE SEQUENCE [LARGE SCALE MRNA] (ISOFORM 1)</scope>
    <source>
        <tissue>Placenta</tissue>
    </source>
</reference>
<reference key="10">
    <citation type="submission" date="2008-12" db="UniProtKB">
        <authorList>
            <person name="Lubec G."/>
            <person name="Vishwanath V."/>
            <person name="Chen W.-Q."/>
            <person name="Sun Y."/>
        </authorList>
    </citation>
    <scope>PROTEIN SEQUENCE OF 16-28; 33-50; 90-103; 163-179; 184-193; 240-262; 270-285; 336-372 AND 413-422</scope>
    <scope>IDENTIFICATION BY MASS SPECTROMETRY</scope>
    <source>
        <tissue>Brain</tissue>
        <tissue>Cajal-Retzius cell</tissue>
        <tissue>Fetal brain cortex</tissue>
    </source>
</reference>
<reference key="11">
    <citation type="journal article" date="1987" name="FEBS Lett.">
        <title>Sequence conservation in the 3'-untranslated regions of neurone-specific enolase, lymphokine and protooncogene mRNAs.</title>
        <authorList>
            <person name="Day I.N.M."/>
            <person name="Allsopp M.T.E.P."/>
            <person name="Moore D.C.M."/>
            <person name="Thompson R.J."/>
        </authorList>
    </citation>
    <scope>NUCLEOTIDE SEQUENCE [MRNA] OF 425-434 (ISOFORM 1/2)</scope>
</reference>
<reference key="12">
    <citation type="journal article" date="2005" name="Nat. Biotechnol.">
        <title>Immunoaffinity profiling of tyrosine phosphorylation in cancer cells.</title>
        <authorList>
            <person name="Rush J."/>
            <person name="Moritz A."/>
            <person name="Lee K.A."/>
            <person name="Guo A."/>
            <person name="Goss V.L."/>
            <person name="Spek E.J."/>
            <person name="Zhang H."/>
            <person name="Zha X.-M."/>
            <person name="Polakiewicz R.D."/>
            <person name="Comb M.J."/>
        </authorList>
    </citation>
    <scope>PHOSPHORYLATION [LARGE SCALE ANALYSIS] AT TYR-44</scope>
    <scope>IDENTIFICATION BY MASS SPECTROMETRY [LARGE SCALE ANALYSIS]</scope>
</reference>
<reference key="13">
    <citation type="journal article" date="2010" name="Sci. Signal.">
        <title>Quantitative phosphoproteomics reveals widespread full phosphorylation site occupancy during mitosis.</title>
        <authorList>
            <person name="Olsen J.V."/>
            <person name="Vermeulen M."/>
            <person name="Santamaria A."/>
            <person name="Kumar C."/>
            <person name="Miller M.L."/>
            <person name="Jensen L.J."/>
            <person name="Gnad F."/>
            <person name="Cox J."/>
            <person name="Jensen T.S."/>
            <person name="Nigg E.A."/>
            <person name="Brunak S."/>
            <person name="Mann M."/>
        </authorList>
    </citation>
    <scope>PHOSPHORYLATION [LARGE SCALE ANALYSIS] AT THR-26</scope>
    <scope>IDENTIFICATION BY MASS SPECTROMETRY [LARGE SCALE ANALYSIS]</scope>
    <source>
        <tissue>Cervix carcinoma</tissue>
    </source>
</reference>
<reference key="14">
    <citation type="journal article" date="2011" name="BMC Syst. Biol.">
        <title>Initial characterization of the human central proteome.</title>
        <authorList>
            <person name="Burkard T.R."/>
            <person name="Planyavsky M."/>
            <person name="Kaupe I."/>
            <person name="Breitwieser F.P."/>
            <person name="Buerckstuemmer T."/>
            <person name="Bennett K.L."/>
            <person name="Superti-Furga G."/>
            <person name="Colinge J."/>
        </authorList>
    </citation>
    <scope>IDENTIFICATION BY MASS SPECTROMETRY [LARGE SCALE ANALYSIS]</scope>
</reference>
<reference key="15">
    <citation type="journal article" date="2013" name="J. Proteome Res.">
        <title>Toward a comprehensive characterization of a human cancer cell phosphoproteome.</title>
        <authorList>
            <person name="Zhou H."/>
            <person name="Di Palma S."/>
            <person name="Preisinger C."/>
            <person name="Peng M."/>
            <person name="Polat A.N."/>
            <person name="Heck A.J."/>
            <person name="Mohammed S."/>
        </authorList>
    </citation>
    <scope>PHOSPHORYLATION [LARGE SCALE ANALYSIS] AT SER-263</scope>
    <scope>IDENTIFICATION BY MASS SPECTROMETRY [LARGE SCALE ANALYSIS]</scope>
    <source>
        <tissue>Cervix carcinoma</tissue>
        <tissue>Erythroleukemia</tissue>
    </source>
</reference>
<reference key="16">
    <citation type="journal article" date="2014" name="J. Proteomics">
        <title>An enzyme assisted RP-RPLC approach for in-depth analysis of human liver phosphoproteome.</title>
        <authorList>
            <person name="Bian Y."/>
            <person name="Song C."/>
            <person name="Cheng K."/>
            <person name="Dong M."/>
            <person name="Wang F."/>
            <person name="Huang J."/>
            <person name="Sun D."/>
            <person name="Wang L."/>
            <person name="Ye M."/>
            <person name="Zou H."/>
        </authorList>
    </citation>
    <scope>IDENTIFICATION BY MASS SPECTROMETRY [LARGE SCALE ANALYSIS]</scope>
    <source>
        <tissue>Liver</tissue>
    </source>
</reference>
<reference key="17">
    <citation type="journal article" date="2018" name="Mol. Cell">
        <title>p300-mediated lysine 2-hydroxyisobutyrylation regulates glycolysis.</title>
        <authorList>
            <person name="Huang H."/>
            <person name="Tang S."/>
            <person name="Ji M."/>
            <person name="Tang Z."/>
            <person name="Shimada M."/>
            <person name="Liu X."/>
            <person name="Qi S."/>
            <person name="Locasale J.W."/>
            <person name="Roeder R.G."/>
            <person name="Zhao Y."/>
            <person name="Li X."/>
        </authorList>
    </citation>
    <scope>HYDROXYBUTYRYLATION AT LYS-233</scope>
</reference>
<reference key="18">
    <citation type="journal article" date="2022" name="Proc. Natl. Acad. Sci. U.S.A.">
        <title>Human cytomegalovirus induces neuronal enolase to support virally mediated metabolic remodeling.</title>
        <authorList>
            <person name="Moreno I. Jr."/>
            <person name="Rodriguez-Sanchez I."/>
            <person name="Schafer X."/>
            <person name="Munger J."/>
        </authorList>
    </citation>
    <scope>INDUCTION BY HCMV UL38 (MICROBIAL INFECTION)</scope>
</reference>
<reference key="19">
    <citation type="journal article" date="2004" name="J. Mol. Biol.">
        <title>Expression, purification and the 1.8 angstroms resolution crystal structure of human neuron specific enolase.</title>
        <authorList>
            <person name="Chai G."/>
            <person name="Brewer J.M."/>
            <person name="Lovelace L.L."/>
            <person name="Aoki T."/>
            <person name="Minor W."/>
            <person name="Lebioda L."/>
        </authorList>
    </citation>
    <scope>X-RAY CRYSTALLOGRAPHY (1.8 ANGSTROMS) IN COMPLEX WITH MAGNESIUM IONS</scope>
</reference>
<protein>
    <recommendedName>
        <fullName>Gamma-enolase</fullName>
        <ecNumber>4.2.1.11</ecNumber>
    </recommendedName>
    <alternativeName>
        <fullName>2-phospho-D-glycerate hydro-lyase</fullName>
    </alternativeName>
    <alternativeName>
        <fullName>Enolase 2</fullName>
    </alternativeName>
    <alternativeName>
        <fullName>Neural enolase</fullName>
    </alternativeName>
    <alternativeName>
        <fullName>Neuron-specific enolase</fullName>
        <shortName>NSE</shortName>
    </alternativeName>
</protein>